<gene>
    <name type="primary">pgaX</name>
    <name type="ORF">AFLA_131770</name>
</gene>
<comment type="function">
    <text evidence="1">Specific in hydrolyzing the terminal glycosidic bond of polygalacturonic acid and oligogalacturonates.</text>
</comment>
<comment type="catalytic activity">
    <reaction>
        <text>[(1-&gt;4)-alpha-D-galacturonosyl](n) + H2O = alpha-D-galacturonate + [(1-&gt;4)-alpha-D-galacturonosyl](n-1)</text>
        <dbReference type="Rhea" id="RHEA:14117"/>
        <dbReference type="Rhea" id="RHEA-COMP:14570"/>
        <dbReference type="Rhea" id="RHEA-COMP:14572"/>
        <dbReference type="ChEBI" id="CHEBI:15377"/>
        <dbReference type="ChEBI" id="CHEBI:58658"/>
        <dbReference type="ChEBI" id="CHEBI:140523"/>
        <dbReference type="EC" id="3.2.1.67"/>
    </reaction>
</comment>
<comment type="subcellular location">
    <subcellularLocation>
        <location evidence="1">Secreted</location>
    </subcellularLocation>
</comment>
<comment type="similarity">
    <text evidence="5">Belongs to the glycosyl hydrolase 28 family.</text>
</comment>
<keyword id="KW-0961">Cell wall biogenesis/degradation</keyword>
<keyword id="KW-1015">Disulfide bond</keyword>
<keyword id="KW-0325">Glycoprotein</keyword>
<keyword id="KW-0326">Glycosidase</keyword>
<keyword id="KW-0378">Hydrolase</keyword>
<keyword id="KW-0677">Repeat</keyword>
<keyword id="KW-0964">Secreted</keyword>
<keyword id="KW-0732">Signal</keyword>
<name>PGLRX_ASPFN</name>
<accession>B8NG16</accession>
<reference key="1">
    <citation type="journal article" date="2015" name="Genome Announc.">
        <title>Genome sequence of Aspergillus flavus NRRL 3357, a strain that causes aflatoxin contamination of food and feed.</title>
        <authorList>
            <person name="Nierman W.C."/>
            <person name="Yu J."/>
            <person name="Fedorova-Abrams N.D."/>
            <person name="Losada L."/>
            <person name="Cleveland T.E."/>
            <person name="Bhatnagar D."/>
            <person name="Bennett J.W."/>
            <person name="Dean R."/>
            <person name="Payne G.A."/>
        </authorList>
    </citation>
    <scope>NUCLEOTIDE SEQUENCE [LARGE SCALE GENOMIC DNA]</scope>
    <source>
        <strain>ATCC 200026 / FGSC A1120 / IAM 13836 / NRRL 3357 / JCM 12722 / SRRC 167</strain>
    </source>
</reference>
<protein>
    <recommendedName>
        <fullName>Probable exopolygalacturonase X</fullName>
        <shortName>ExoPG</shortName>
        <ecNumber>3.2.1.67</ecNumber>
    </recommendedName>
    <alternativeName>
        <fullName>Galacturan 1,4-alpha-galacturonidase</fullName>
    </alternativeName>
    <alternativeName>
        <fullName>Poly(1,4-alpha-D-galacturonide)galacturonohydrolase</fullName>
    </alternativeName>
</protein>
<sequence>MKLTQATTLLLSLGLSLPVEGFSLSRTNAVGPKPPFRPLPASTPRNKTCQVQSNGDGTDDAPYILAALKQCNNGGKVVFAEDKEYTIGTALDMTFLKHVDLEILGKITFTPDTDYWQENSFKHTFQNATTFFNLGGTDVNVYGGGELNGNGQVWYDLYAEDALILRPILVGIIGLHGGTIGPLKLRYSPQWYQLVANSSDVLFDGIDISGYSSSENEAKNTDGWDTYRSSNIVIQNSVINNGDDCVSFKPNSTEILVQNLHCNGSHGISVGSLGQYQGEVDIVQNVLVYNISMYNASDMARIKVWPGISSAMSEDLQGGGGLGSVQNITYDKMYIENVDWAIEVTQCYGQKNQTLCNENPSNLTISDVYFNDLTGVTSGKNDPNVGTIICSSPDVCSGIHATNIDVKSPDGDSGFVCTNVDEEFLDVECASSS</sequence>
<proteinExistence type="inferred from homology"/>
<dbReference type="EC" id="3.2.1.67"/>
<dbReference type="EMBL" id="EQ963478">
    <property type="protein sequence ID" value="EED50415.1"/>
    <property type="molecule type" value="Genomic_DNA"/>
</dbReference>
<dbReference type="RefSeq" id="XP_002379191.1">
    <property type="nucleotide sequence ID" value="XM_002379150.1"/>
</dbReference>
<dbReference type="SMR" id="B8NG16"/>
<dbReference type="STRING" id="332952.B8NG16"/>
<dbReference type="GlyCosmos" id="B8NG16">
    <property type="glycosylation" value="10 sites, No reported glycans"/>
</dbReference>
<dbReference type="EnsemblFungi" id="EED50415">
    <property type="protein sequence ID" value="EED50415"/>
    <property type="gene ID" value="AFLA_131770"/>
</dbReference>
<dbReference type="VEuPathDB" id="FungiDB:AFLA_005505"/>
<dbReference type="eggNOG" id="ENOG502QPPR">
    <property type="taxonomic scope" value="Eukaryota"/>
</dbReference>
<dbReference type="HOGENOM" id="CLU_016031_1_0_1"/>
<dbReference type="OMA" id="YSPQWYT"/>
<dbReference type="GO" id="GO:0005576">
    <property type="term" value="C:extracellular region"/>
    <property type="evidence" value="ECO:0000250"/>
    <property type="project" value="UniProtKB"/>
</dbReference>
<dbReference type="GO" id="GO:0047911">
    <property type="term" value="F:galacturan 1,4-alpha-galacturonidase activity"/>
    <property type="evidence" value="ECO:0007669"/>
    <property type="project" value="UniProtKB-EC"/>
</dbReference>
<dbReference type="GO" id="GO:0004650">
    <property type="term" value="F:polygalacturonase activity"/>
    <property type="evidence" value="ECO:0000250"/>
    <property type="project" value="UniProtKB"/>
</dbReference>
<dbReference type="GO" id="GO:0071555">
    <property type="term" value="P:cell wall organization"/>
    <property type="evidence" value="ECO:0007669"/>
    <property type="project" value="UniProtKB-KW"/>
</dbReference>
<dbReference type="GO" id="GO:0045490">
    <property type="term" value="P:pectin catabolic process"/>
    <property type="evidence" value="ECO:0000250"/>
    <property type="project" value="UniProtKB"/>
</dbReference>
<dbReference type="FunFam" id="2.160.20.10:FF:000027">
    <property type="entry name" value="Probable exopolygalacturonase X"/>
    <property type="match status" value="1"/>
</dbReference>
<dbReference type="Gene3D" id="2.160.20.10">
    <property type="entry name" value="Single-stranded right-handed beta-helix, Pectin lyase-like"/>
    <property type="match status" value="1"/>
</dbReference>
<dbReference type="InterPro" id="IPR000743">
    <property type="entry name" value="Glyco_hydro_28"/>
</dbReference>
<dbReference type="InterPro" id="IPR006626">
    <property type="entry name" value="PbH1"/>
</dbReference>
<dbReference type="InterPro" id="IPR012334">
    <property type="entry name" value="Pectin_lyas_fold"/>
</dbReference>
<dbReference type="InterPro" id="IPR011050">
    <property type="entry name" value="Pectin_lyase_fold/virulence"/>
</dbReference>
<dbReference type="PANTHER" id="PTHR31736">
    <property type="match status" value="1"/>
</dbReference>
<dbReference type="PANTHER" id="PTHR31736:SF14">
    <property type="entry name" value="EXOPOLYGALACTURONASE X-1-RELATED"/>
    <property type="match status" value="1"/>
</dbReference>
<dbReference type="Pfam" id="PF00295">
    <property type="entry name" value="Glyco_hydro_28"/>
    <property type="match status" value="1"/>
</dbReference>
<dbReference type="SMART" id="SM00710">
    <property type="entry name" value="PbH1"/>
    <property type="match status" value="4"/>
</dbReference>
<dbReference type="SUPFAM" id="SSF51126">
    <property type="entry name" value="Pectin lyase-like"/>
    <property type="match status" value="1"/>
</dbReference>
<dbReference type="PROSITE" id="PS00502">
    <property type="entry name" value="POLYGALACTURONASE"/>
    <property type="match status" value="1"/>
</dbReference>
<evidence type="ECO:0000250" key="1"/>
<evidence type="ECO:0000255" key="2"/>
<evidence type="ECO:0000255" key="3">
    <source>
        <dbReference type="PROSITE-ProRule" id="PRU10052"/>
    </source>
</evidence>
<evidence type="ECO:0000256" key="4">
    <source>
        <dbReference type="SAM" id="MobiDB-lite"/>
    </source>
</evidence>
<evidence type="ECO:0000305" key="5"/>
<feature type="signal peptide" evidence="2">
    <location>
        <begin position="1"/>
        <end position="21"/>
    </location>
</feature>
<feature type="chain" id="PRO_0000393667" description="Probable exopolygalacturonase X">
    <location>
        <begin position="22"/>
        <end position="433"/>
    </location>
</feature>
<feature type="repeat" description="PbH1 1">
    <location>
        <begin position="229"/>
        <end position="250"/>
    </location>
</feature>
<feature type="repeat" description="PbH1 2">
    <location>
        <begin position="252"/>
        <end position="272"/>
    </location>
</feature>
<feature type="repeat" description="PbH1 3">
    <location>
        <begin position="325"/>
        <end position="346"/>
    </location>
</feature>
<feature type="repeat" description="PbH1 4">
    <location>
        <begin position="360"/>
        <end position="403"/>
    </location>
</feature>
<feature type="region of interest" description="Disordered" evidence="4">
    <location>
        <begin position="30"/>
        <end position="54"/>
    </location>
</feature>
<feature type="compositionally biased region" description="Polar residues" evidence="4">
    <location>
        <begin position="43"/>
        <end position="54"/>
    </location>
</feature>
<feature type="active site" description="Proton donor" evidence="3">
    <location>
        <position position="243"/>
    </location>
</feature>
<feature type="active site" evidence="3">
    <location>
        <position position="266"/>
    </location>
</feature>
<feature type="glycosylation site" description="N-linked (GlcNAc...) asparagine" evidence="2">
    <location>
        <position position="46"/>
    </location>
</feature>
<feature type="glycosylation site" description="N-linked (GlcNAc...) asparagine" evidence="2">
    <location>
        <position position="127"/>
    </location>
</feature>
<feature type="glycosylation site" description="N-linked (GlcNAc...) asparagine" evidence="2">
    <location>
        <position position="197"/>
    </location>
</feature>
<feature type="glycosylation site" description="N-linked (GlcNAc...) asparagine" evidence="2">
    <location>
        <position position="251"/>
    </location>
</feature>
<feature type="glycosylation site" description="N-linked (GlcNAc...) asparagine" evidence="2">
    <location>
        <position position="263"/>
    </location>
</feature>
<feature type="glycosylation site" description="N-linked (GlcNAc...) asparagine" evidence="2">
    <location>
        <position position="290"/>
    </location>
</feature>
<feature type="glycosylation site" description="N-linked (GlcNAc...) asparagine" evidence="2">
    <location>
        <position position="295"/>
    </location>
</feature>
<feature type="glycosylation site" description="N-linked (GlcNAc...) asparagine" evidence="2">
    <location>
        <position position="327"/>
    </location>
</feature>
<feature type="glycosylation site" description="N-linked (GlcNAc...) asparagine" evidence="2">
    <location>
        <position position="352"/>
    </location>
</feature>
<feature type="glycosylation site" description="N-linked (GlcNAc...) asparagine" evidence="2">
    <location>
        <position position="362"/>
    </location>
</feature>
<feature type="disulfide bond" evidence="1">
    <location>
        <begin position="245"/>
        <end position="262"/>
    </location>
</feature>
<feature type="disulfide bond" evidence="1">
    <location>
        <begin position="390"/>
        <end position="396"/>
    </location>
</feature>
<organism>
    <name type="scientific">Aspergillus flavus (strain ATCC 200026 / FGSC A1120 / IAM 13836 / NRRL 3357 / JCM 12722 / SRRC 167)</name>
    <dbReference type="NCBI Taxonomy" id="332952"/>
    <lineage>
        <taxon>Eukaryota</taxon>
        <taxon>Fungi</taxon>
        <taxon>Dikarya</taxon>
        <taxon>Ascomycota</taxon>
        <taxon>Pezizomycotina</taxon>
        <taxon>Eurotiomycetes</taxon>
        <taxon>Eurotiomycetidae</taxon>
        <taxon>Eurotiales</taxon>
        <taxon>Aspergillaceae</taxon>
        <taxon>Aspergillus</taxon>
        <taxon>Aspergillus subgen. Circumdati</taxon>
    </lineage>
</organism>